<feature type="propeptide" id="PRO_0000459888" evidence="1">
    <location>
        <begin position="1"/>
        <end position="9"/>
    </location>
</feature>
<feature type="chain" id="PRO_1000081883" description="Large ribosomal subunit protein bL27">
    <location>
        <begin position="10"/>
        <end position="95"/>
    </location>
</feature>
<comment type="PTM">
    <text evidence="1">The N-terminus is cleaved by ribosomal processing cysteine protease Prp.</text>
</comment>
<comment type="similarity">
    <text evidence="2">Belongs to the bacterial ribosomal protein bL27 family.</text>
</comment>
<name>RL27_LACP7</name>
<evidence type="ECO:0000250" key="1">
    <source>
        <dbReference type="UniProtKB" id="Q2FXT0"/>
    </source>
</evidence>
<evidence type="ECO:0000255" key="2">
    <source>
        <dbReference type="HAMAP-Rule" id="MF_00539"/>
    </source>
</evidence>
<evidence type="ECO:0000305" key="3"/>
<gene>
    <name evidence="2" type="primary">rpmA</name>
    <name type="ordered locus">Cphy_2549</name>
</gene>
<accession>A9KMF6</accession>
<keyword id="KW-1185">Reference proteome</keyword>
<keyword id="KW-0687">Ribonucleoprotein</keyword>
<keyword id="KW-0689">Ribosomal protein</keyword>
<reference key="1">
    <citation type="submission" date="2007-11" db="EMBL/GenBank/DDBJ databases">
        <title>Complete genome sequence of Clostridium phytofermentans ISDg.</title>
        <authorList>
            <person name="Leschine S.B."/>
            <person name="Warnick T.A."/>
            <person name="Blanchard J.L."/>
            <person name="Schnell D.J."/>
            <person name="Petit E.L."/>
            <person name="LaTouf W.G."/>
            <person name="Copeland A."/>
            <person name="Lucas S."/>
            <person name="Lapidus A."/>
            <person name="Barry K."/>
            <person name="Glavina del Rio T."/>
            <person name="Dalin E."/>
            <person name="Tice H."/>
            <person name="Pitluck S."/>
            <person name="Kiss H."/>
            <person name="Brettin T."/>
            <person name="Bruce D."/>
            <person name="Detter J.C."/>
            <person name="Han C."/>
            <person name="Kuske C."/>
            <person name="Schmutz J."/>
            <person name="Larimer F."/>
            <person name="Land M."/>
            <person name="Hauser L."/>
            <person name="Kyrpides N."/>
            <person name="Kim E.A."/>
            <person name="Richardson P."/>
        </authorList>
    </citation>
    <scope>NUCLEOTIDE SEQUENCE [LARGE SCALE GENOMIC DNA]</scope>
    <source>
        <strain>ATCC 700394 / DSM 18823 / ISDg</strain>
    </source>
</reference>
<protein>
    <recommendedName>
        <fullName evidence="2">Large ribosomal subunit protein bL27</fullName>
    </recommendedName>
    <alternativeName>
        <fullName evidence="3">50S ribosomal protein L27</fullName>
    </alternativeName>
</protein>
<dbReference type="EMBL" id="CP000885">
    <property type="protein sequence ID" value="ABX42910.1"/>
    <property type="molecule type" value="Genomic_DNA"/>
</dbReference>
<dbReference type="RefSeq" id="WP_012200563.1">
    <property type="nucleotide sequence ID" value="NC_010001.1"/>
</dbReference>
<dbReference type="SMR" id="A9KMF6"/>
<dbReference type="STRING" id="357809.Cphy_2549"/>
<dbReference type="KEGG" id="cpy:Cphy_2549"/>
<dbReference type="eggNOG" id="COG0211">
    <property type="taxonomic scope" value="Bacteria"/>
</dbReference>
<dbReference type="HOGENOM" id="CLU_095424_4_0_9"/>
<dbReference type="OrthoDB" id="9803474at2"/>
<dbReference type="Proteomes" id="UP000000370">
    <property type="component" value="Chromosome"/>
</dbReference>
<dbReference type="GO" id="GO:0022625">
    <property type="term" value="C:cytosolic large ribosomal subunit"/>
    <property type="evidence" value="ECO:0007669"/>
    <property type="project" value="TreeGrafter"/>
</dbReference>
<dbReference type="GO" id="GO:0003735">
    <property type="term" value="F:structural constituent of ribosome"/>
    <property type="evidence" value="ECO:0007669"/>
    <property type="project" value="InterPro"/>
</dbReference>
<dbReference type="GO" id="GO:0006412">
    <property type="term" value="P:translation"/>
    <property type="evidence" value="ECO:0007669"/>
    <property type="project" value="UniProtKB-UniRule"/>
</dbReference>
<dbReference type="FunFam" id="2.40.50.100:FF:000004">
    <property type="entry name" value="50S ribosomal protein L27"/>
    <property type="match status" value="1"/>
</dbReference>
<dbReference type="Gene3D" id="2.40.50.100">
    <property type="match status" value="1"/>
</dbReference>
<dbReference type="HAMAP" id="MF_00539">
    <property type="entry name" value="Ribosomal_bL27"/>
    <property type="match status" value="1"/>
</dbReference>
<dbReference type="InterPro" id="IPR001684">
    <property type="entry name" value="Ribosomal_bL27"/>
</dbReference>
<dbReference type="InterPro" id="IPR018261">
    <property type="entry name" value="Ribosomal_bL27_CS"/>
</dbReference>
<dbReference type="NCBIfam" id="TIGR00062">
    <property type="entry name" value="L27"/>
    <property type="match status" value="1"/>
</dbReference>
<dbReference type="PANTHER" id="PTHR15893:SF0">
    <property type="entry name" value="LARGE RIBOSOMAL SUBUNIT PROTEIN BL27M"/>
    <property type="match status" value="1"/>
</dbReference>
<dbReference type="PANTHER" id="PTHR15893">
    <property type="entry name" value="RIBOSOMAL PROTEIN L27"/>
    <property type="match status" value="1"/>
</dbReference>
<dbReference type="Pfam" id="PF01016">
    <property type="entry name" value="Ribosomal_L27"/>
    <property type="match status" value="1"/>
</dbReference>
<dbReference type="PRINTS" id="PR00063">
    <property type="entry name" value="RIBOSOMALL27"/>
</dbReference>
<dbReference type="SUPFAM" id="SSF110324">
    <property type="entry name" value="Ribosomal L27 protein-like"/>
    <property type="match status" value="1"/>
</dbReference>
<dbReference type="PROSITE" id="PS00831">
    <property type="entry name" value="RIBOSOMAL_L27"/>
    <property type="match status" value="1"/>
</dbReference>
<proteinExistence type="inferred from homology"/>
<organism>
    <name type="scientific">Lachnoclostridium phytofermentans (strain ATCC 700394 / DSM 18823 / ISDg)</name>
    <name type="common">Clostridium phytofermentans</name>
    <dbReference type="NCBI Taxonomy" id="357809"/>
    <lineage>
        <taxon>Bacteria</taxon>
        <taxon>Bacillati</taxon>
        <taxon>Bacillota</taxon>
        <taxon>Clostridia</taxon>
        <taxon>Lachnospirales</taxon>
        <taxon>Lachnospiraceae</taxon>
    </lineage>
</organism>
<sequence>MLKMNLQFFAHKKGVGSTKNGRDSESKRLGAKRADGQFVLAGNILYRQRGTKIHPGVNVGRGGDDTLFALVDGVLKFERKGRDKKQASVYPVEAK</sequence>